<feature type="chain" id="PRO_0000390670" description="Protein wntless" evidence="4">
    <location>
        <begin position="1"/>
        <end position="562"/>
    </location>
</feature>
<feature type="topological domain" description="Cytoplasmic" evidence="2">
    <location>
        <begin position="1"/>
        <end position="13"/>
    </location>
</feature>
<feature type="transmembrane region" description="Helical; Name=1" evidence="4">
    <location>
        <begin position="14"/>
        <end position="34"/>
    </location>
</feature>
<feature type="topological domain" description="Lumenal" evidence="2">
    <location>
        <begin position="35"/>
        <end position="239"/>
    </location>
</feature>
<feature type="transmembrane region" description="Helical; Name=2" evidence="4">
    <location>
        <begin position="240"/>
        <end position="260"/>
    </location>
</feature>
<feature type="topological domain" description="Cytoplasmic" evidence="2">
    <location>
        <begin position="261"/>
        <end position="270"/>
    </location>
</feature>
<feature type="transmembrane region" description="Helical; Name=3" evidence="4">
    <location>
        <begin position="271"/>
        <end position="291"/>
    </location>
</feature>
<feature type="topological domain" description="Lumenal" evidence="2">
    <location>
        <begin position="292"/>
        <end position="311"/>
    </location>
</feature>
<feature type="transmembrane region" description="Helical; Name=4" evidence="4">
    <location>
        <begin position="312"/>
        <end position="332"/>
    </location>
</feature>
<feature type="topological domain" description="Cytoplasmic" evidence="2">
    <location>
        <begin position="333"/>
        <end position="344"/>
    </location>
</feature>
<feature type="transmembrane region" description="Helical; Name=5" evidence="4">
    <location>
        <begin position="345"/>
        <end position="365"/>
    </location>
</feature>
<feature type="topological domain" description="Lumenal" evidence="2">
    <location>
        <begin position="366"/>
        <end position="390"/>
    </location>
</feature>
<feature type="transmembrane region" description="Helical; Name=6" evidence="4">
    <location>
        <begin position="391"/>
        <end position="411"/>
    </location>
</feature>
<feature type="topological domain" description="Cytoplasmic" evidence="2">
    <location>
        <begin position="412"/>
        <end position="441"/>
    </location>
</feature>
<feature type="transmembrane region" description="Helical; Name=7" evidence="4">
    <location>
        <begin position="442"/>
        <end position="462"/>
    </location>
</feature>
<feature type="topological domain" description="Lumenal" evidence="2">
    <location>
        <begin position="463"/>
        <end position="482"/>
    </location>
</feature>
<feature type="transmembrane region" description="Helical; Name=8" evidence="4">
    <location>
        <begin position="483"/>
        <end position="503"/>
    </location>
</feature>
<feature type="topological domain" description="Cytoplasmic" evidence="2">
    <location>
        <begin position="504"/>
        <end position="562"/>
    </location>
</feature>
<feature type="glycosylation site" description="N-linked (GlcNAc...) asparagine" evidence="4">
    <location>
        <position position="58"/>
    </location>
</feature>
<feature type="glycosylation site" description="N-linked (GlcNAc...) asparagine" evidence="4">
    <location>
        <position position="103"/>
    </location>
</feature>
<protein>
    <recommendedName>
        <fullName evidence="3">Protein wntless</fullName>
    </recommendedName>
</protein>
<reference evidence="5" key="1">
    <citation type="journal article" date="2007" name="Nature">
        <title>Evolution of genes and genomes on the Drosophila phylogeny.</title>
        <authorList>
            <consortium name="Drosophila 12 genomes consortium"/>
        </authorList>
    </citation>
    <scope>NUCLEOTIDE SEQUENCE [LARGE SCALE GENOMIC DNA]</scope>
    <source>
        <strain evidence="5">Tucson 15010-1051.87</strain>
    </source>
</reference>
<dbReference type="EMBL" id="CH940647">
    <property type="protein sequence ID" value="EDW70886.1"/>
    <property type="molecule type" value="Genomic_DNA"/>
</dbReference>
<dbReference type="RefSeq" id="XP_002048544.1">
    <property type="nucleotide sequence ID" value="XM_002048508.4"/>
</dbReference>
<dbReference type="SMR" id="B4LC58"/>
<dbReference type="FunCoup" id="B4LC58">
    <property type="interactions" value="613"/>
</dbReference>
<dbReference type="STRING" id="7244.B4LC58"/>
<dbReference type="GlyCosmos" id="B4LC58">
    <property type="glycosylation" value="2 sites, No reported glycans"/>
</dbReference>
<dbReference type="EnsemblMetazoa" id="FBtr0227223">
    <property type="protein sequence ID" value="FBpp0225715"/>
    <property type="gene ID" value="FBgn0198559"/>
</dbReference>
<dbReference type="EnsemblMetazoa" id="XM_002048508.3">
    <property type="protein sequence ID" value="XP_002048544.1"/>
    <property type="gene ID" value="LOC6624414"/>
</dbReference>
<dbReference type="GeneID" id="6624414"/>
<dbReference type="KEGG" id="dvi:6624414"/>
<dbReference type="CTD" id="79971"/>
<dbReference type="eggNOG" id="ENOG502QSE2">
    <property type="taxonomic scope" value="Eukaryota"/>
</dbReference>
<dbReference type="HOGENOM" id="CLU_022911_0_0_1"/>
<dbReference type="InParanoid" id="B4LC58"/>
<dbReference type="OMA" id="GQWKWDE"/>
<dbReference type="OrthoDB" id="5804250at2759"/>
<dbReference type="PhylomeDB" id="B4LC58"/>
<dbReference type="Proteomes" id="UP000008792">
    <property type="component" value="Unassembled WGS sequence"/>
</dbReference>
<dbReference type="GO" id="GO:0042995">
    <property type="term" value="C:cell projection"/>
    <property type="evidence" value="ECO:0007669"/>
    <property type="project" value="UniProtKB-KW"/>
</dbReference>
<dbReference type="GO" id="GO:0005769">
    <property type="term" value="C:early endosome"/>
    <property type="evidence" value="ECO:0007669"/>
    <property type="project" value="EnsemblMetazoa"/>
</dbReference>
<dbReference type="GO" id="GO:0005789">
    <property type="term" value="C:endoplasmic reticulum membrane"/>
    <property type="evidence" value="ECO:0000250"/>
    <property type="project" value="UniProtKB"/>
</dbReference>
<dbReference type="GO" id="GO:0010008">
    <property type="term" value="C:endosome membrane"/>
    <property type="evidence" value="ECO:0000250"/>
    <property type="project" value="UniProtKB"/>
</dbReference>
<dbReference type="GO" id="GO:0070062">
    <property type="term" value="C:extracellular exosome"/>
    <property type="evidence" value="ECO:0007669"/>
    <property type="project" value="EnsemblMetazoa"/>
</dbReference>
<dbReference type="GO" id="GO:0000139">
    <property type="term" value="C:Golgi membrane"/>
    <property type="evidence" value="ECO:0000250"/>
    <property type="project" value="UniProtKB"/>
</dbReference>
<dbReference type="GO" id="GO:0005771">
    <property type="term" value="C:multivesicular body"/>
    <property type="evidence" value="ECO:0007669"/>
    <property type="project" value="EnsemblMetazoa"/>
</dbReference>
<dbReference type="GO" id="GO:0031594">
    <property type="term" value="C:neuromuscular junction"/>
    <property type="evidence" value="ECO:0000250"/>
    <property type="project" value="UniProtKB"/>
</dbReference>
<dbReference type="GO" id="GO:0005886">
    <property type="term" value="C:plasma membrane"/>
    <property type="evidence" value="ECO:0000250"/>
    <property type="project" value="UniProtKB"/>
</dbReference>
<dbReference type="GO" id="GO:0045211">
    <property type="term" value="C:postsynaptic membrane"/>
    <property type="evidence" value="ECO:0000250"/>
    <property type="project" value="UniProtKB"/>
</dbReference>
<dbReference type="GO" id="GO:0042734">
    <property type="term" value="C:presynaptic membrane"/>
    <property type="evidence" value="ECO:0000250"/>
    <property type="project" value="UniProtKB"/>
</dbReference>
<dbReference type="GO" id="GO:0030672">
    <property type="term" value="C:synaptic vesicle membrane"/>
    <property type="evidence" value="ECO:0000250"/>
    <property type="project" value="UniProtKB"/>
</dbReference>
<dbReference type="GO" id="GO:0017147">
    <property type="term" value="F:Wnt-protein binding"/>
    <property type="evidence" value="ECO:0000250"/>
    <property type="project" value="UniProtKB"/>
</dbReference>
<dbReference type="GO" id="GO:0001745">
    <property type="term" value="P:compound eye morphogenesis"/>
    <property type="evidence" value="ECO:0007669"/>
    <property type="project" value="EnsemblMetazoa"/>
</dbReference>
<dbReference type="GO" id="GO:0035017">
    <property type="term" value="P:cuticle pattern formation"/>
    <property type="evidence" value="ECO:0007669"/>
    <property type="project" value="EnsemblMetazoa"/>
</dbReference>
<dbReference type="GO" id="GO:0043001">
    <property type="term" value="P:Golgi to plasma membrane protein transport"/>
    <property type="evidence" value="ECO:0007669"/>
    <property type="project" value="EnsemblMetazoa"/>
</dbReference>
<dbReference type="GO" id="GO:0007480">
    <property type="term" value="P:imaginal disc-derived leg morphogenesis"/>
    <property type="evidence" value="ECO:0007669"/>
    <property type="project" value="EnsemblMetazoa"/>
</dbReference>
<dbReference type="GO" id="GO:0008587">
    <property type="term" value="P:imaginal disc-derived wing margin morphogenesis"/>
    <property type="evidence" value="ECO:0000250"/>
    <property type="project" value="UniProtKB"/>
</dbReference>
<dbReference type="GO" id="GO:0006886">
    <property type="term" value="P:intracellular protein transport"/>
    <property type="evidence" value="ECO:0007669"/>
    <property type="project" value="TreeGrafter"/>
</dbReference>
<dbReference type="GO" id="GO:0050714">
    <property type="term" value="P:positive regulation of protein secretion"/>
    <property type="evidence" value="ECO:0000250"/>
    <property type="project" value="UniProtKB"/>
</dbReference>
<dbReference type="GO" id="GO:0061357">
    <property type="term" value="P:positive regulation of Wnt protein secretion"/>
    <property type="evidence" value="ECO:0007669"/>
    <property type="project" value="EnsemblMetazoa"/>
</dbReference>
<dbReference type="GO" id="GO:0030177">
    <property type="term" value="P:positive regulation of Wnt signaling pathway"/>
    <property type="evidence" value="ECO:0000250"/>
    <property type="project" value="UniProtKB"/>
</dbReference>
<dbReference type="GO" id="GO:0033157">
    <property type="term" value="P:regulation of intracellular protein transport"/>
    <property type="evidence" value="ECO:0000250"/>
    <property type="project" value="UniProtKB"/>
</dbReference>
<dbReference type="GO" id="GO:0007367">
    <property type="term" value="P:segment polarity determination"/>
    <property type="evidence" value="ECO:0000250"/>
    <property type="project" value="UniProtKB"/>
</dbReference>
<dbReference type="GO" id="GO:0099157">
    <property type="term" value="P:trans-synaptic signaling via exosome"/>
    <property type="evidence" value="ECO:0007669"/>
    <property type="project" value="EnsemblMetazoa"/>
</dbReference>
<dbReference type="GO" id="GO:0061355">
    <property type="term" value="P:Wnt protein secretion"/>
    <property type="evidence" value="ECO:0007669"/>
    <property type="project" value="EnsemblMetazoa"/>
</dbReference>
<dbReference type="GO" id="GO:0016055">
    <property type="term" value="P:Wnt signaling pathway"/>
    <property type="evidence" value="ECO:0007669"/>
    <property type="project" value="UniProtKB-KW"/>
</dbReference>
<dbReference type="InterPro" id="IPR047843">
    <property type="entry name" value="WLS-like_TM"/>
</dbReference>
<dbReference type="InterPro" id="IPR053936">
    <property type="entry name" value="WLS_GOLD"/>
</dbReference>
<dbReference type="InterPro" id="IPR009551">
    <property type="entry name" value="Wntless"/>
</dbReference>
<dbReference type="PANTHER" id="PTHR13449">
    <property type="entry name" value="INTEGRAL MEMBRANE PROTEIN GPR177"/>
    <property type="match status" value="1"/>
</dbReference>
<dbReference type="PANTHER" id="PTHR13449:SF2">
    <property type="entry name" value="PROTEIN WNTLESS HOMOLOG"/>
    <property type="match status" value="1"/>
</dbReference>
<dbReference type="Pfam" id="PF06664">
    <property type="entry name" value="WLS-like_TM"/>
    <property type="match status" value="1"/>
</dbReference>
<dbReference type="Pfam" id="PF21883">
    <property type="entry name" value="WLS_GOLD"/>
    <property type="match status" value="1"/>
</dbReference>
<accession>B4LC58</accession>
<sequence>MSGTILENLSGRKLSILVSSLMLCQVACFLMGGLYAPVPAGHQTVVGIKCRDVPGRQNDTNFFLYSRGNGACKSLQDMDIEQDPLKMANQLVYVFQMPLPRDNRTLDYSRWQQNLIGVLQVDIAYDSSSELREPPKELQLTIDTRLAYRNKKDADTDWKLYAHSVEQRYLDCHAAHVGLLETLYTCDIIPLFELGALHHNFYLLNLRFPIDTPKRMNLQFGHMHDLTLTAIHQNGGFTQVWLLLKTLLFPFVVGIMIWFWRRVHILQRSPALLEYMLLYLGGALSFLNLPLEYLTLSIEMPYMLLLSDVRQGIFYAMLLSFWLVFAGEHMLIQDTPNKSTIRSRYWKHLSAVVVGCISLFVFDICERGVQLRNPFYSIWTTPLGAKVAMSFIVLAGVSAAIYFLFLCFMVWKVFKDIGDKRTSLPSMSQARRLHYEGLIYRFKFLMLATLLCAGLTVAGFIMGQMAEGHWKWNEDIEIQLTSAFLTGVYGMWNIYIFALIILYAPSHKQWPTMRHSDETTQSNENIVASAASEEIEFSNLPSDSNPSEISSLTSFTRKVAFD</sequence>
<name>WLS_DROVI</name>
<comment type="function">
    <text evidence="1">A segment polarity gene required for wingless (wg)-dependent patterning processes, acting in both wg-sending cells and wg-target cells. In non-neuronal cells wls directs wg secretion. The wls traffic loop encompasses the Golgi, the cell surface, an endocytic compartment and a retrograde route leading back to the Golgi, and involves clathrin-mediated endocytosis and the retromer complex (a conserved protein complex consisting of Vps35 and Vps26). In neuronal cells (the larval motorneuron NMJ), the wg signal moves across the synapse via the release of wls-containing exosome-like vesicles. Postsynaptic wls is required for the trafficking of fz2 through the fz2-interacting protein Grip (By similarity).</text>
</comment>
<comment type="subunit">
    <text evidence="1">Interacts with wg; in the Golgi. Interacts with Vps35, a component of the retromer complex; wls stability is regulated by Vps35 (By similarity).</text>
</comment>
<comment type="subcellular location">
    <subcellularLocation>
        <location evidence="3">Presynaptic cell membrane</location>
        <topology evidence="3">Multi-pass membrane protein</topology>
    </subcellularLocation>
    <subcellularLocation>
        <location evidence="3">Postsynaptic cell membrane</location>
        <topology evidence="3">Multi-pass membrane protein</topology>
    </subcellularLocation>
    <subcellularLocation>
        <location evidence="3">Cell membrane</location>
        <topology evidence="3">Multi-pass membrane protein</topology>
    </subcellularLocation>
    <subcellularLocation>
        <location evidence="3">Endoplasmic reticulum membrane</location>
        <topology evidence="3">Multi-pass membrane protein</topology>
    </subcellularLocation>
    <subcellularLocation>
        <location evidence="3">Endosome membrane</location>
        <topology evidence="3">Multi-pass membrane protein</topology>
    </subcellularLocation>
    <subcellularLocation>
        <location evidence="3">Golgi apparatus membrane</location>
        <topology evidence="3">Multi-pass membrane protein</topology>
    </subcellularLocation>
    <text evidence="1">In non-neuronal cells, wls binds to wg in the Golgi and accompanies it to the plasma membrane where the two proteins dissociate. Wg is secreted and wls is then internalized and returns to the Golgi apparatus in a retromer-dependent manner. Wls and wg colocalize in the Golgi apparatus in wg-producing cells, and reduced expression is seen in non-producing cells. Endoplasmic reticulum expression is unchanged in wg-producing versus non-producing cells. In neuronal cells, wls is localized both pre- and postsynaptically and is transferred trans-synaptically from the pre- to the postsynaptic compartment (By similarity).</text>
</comment>
<comment type="similarity">
    <text evidence="4">Belongs to the wntless family.</text>
</comment>
<evidence type="ECO:0000250" key="1"/>
<evidence type="ECO:0000250" key="2">
    <source>
        <dbReference type="UniProtKB" id="Q5T9L3"/>
    </source>
</evidence>
<evidence type="ECO:0000250" key="3">
    <source>
        <dbReference type="UniProtKB" id="Q95ST2"/>
    </source>
</evidence>
<evidence type="ECO:0000255" key="4"/>
<evidence type="ECO:0000312" key="5">
    <source>
        <dbReference type="EMBL" id="EDW70886.1"/>
    </source>
</evidence>
<gene>
    <name evidence="3" type="primary">wls</name>
    <name type="ORF">GJ11298</name>
</gene>
<proteinExistence type="inferred from homology"/>
<organism>
    <name type="scientific">Drosophila virilis</name>
    <name type="common">Fruit fly</name>
    <dbReference type="NCBI Taxonomy" id="7244"/>
    <lineage>
        <taxon>Eukaryota</taxon>
        <taxon>Metazoa</taxon>
        <taxon>Ecdysozoa</taxon>
        <taxon>Arthropoda</taxon>
        <taxon>Hexapoda</taxon>
        <taxon>Insecta</taxon>
        <taxon>Pterygota</taxon>
        <taxon>Neoptera</taxon>
        <taxon>Endopterygota</taxon>
        <taxon>Diptera</taxon>
        <taxon>Brachycera</taxon>
        <taxon>Muscomorpha</taxon>
        <taxon>Ephydroidea</taxon>
        <taxon>Drosophilidae</taxon>
        <taxon>Drosophila</taxon>
    </lineage>
</organism>
<keyword id="KW-1003">Cell membrane</keyword>
<keyword id="KW-0966">Cell projection</keyword>
<keyword id="KW-0217">Developmental protein</keyword>
<keyword id="KW-0256">Endoplasmic reticulum</keyword>
<keyword id="KW-0967">Endosome</keyword>
<keyword id="KW-0325">Glycoprotein</keyword>
<keyword id="KW-0333">Golgi apparatus</keyword>
<keyword id="KW-0472">Membrane</keyword>
<keyword id="KW-0628">Postsynaptic cell membrane</keyword>
<keyword id="KW-1185">Reference proteome</keyword>
<keyword id="KW-0709">Segmentation polarity protein</keyword>
<keyword id="KW-0770">Synapse</keyword>
<keyword id="KW-0812">Transmembrane</keyword>
<keyword id="KW-1133">Transmembrane helix</keyword>
<keyword id="KW-0879">Wnt signaling pathway</keyword>